<dbReference type="EMBL" id="AP006840">
    <property type="protein sequence ID" value="BAD41266.1"/>
    <property type="molecule type" value="Genomic_DNA"/>
</dbReference>
<dbReference type="RefSeq" id="WP_011196404.1">
    <property type="nucleotide sequence ID" value="NC_006177.1"/>
</dbReference>
<dbReference type="SMR" id="Q67M29"/>
<dbReference type="STRING" id="292459.STH2281"/>
<dbReference type="KEGG" id="sth:STH2281"/>
<dbReference type="eggNOG" id="COG1825">
    <property type="taxonomic scope" value="Bacteria"/>
</dbReference>
<dbReference type="HOGENOM" id="CLU_075939_2_1_9"/>
<dbReference type="OrthoDB" id="9790002at2"/>
<dbReference type="Proteomes" id="UP000000417">
    <property type="component" value="Chromosome"/>
</dbReference>
<dbReference type="GO" id="GO:0022625">
    <property type="term" value="C:cytosolic large ribosomal subunit"/>
    <property type="evidence" value="ECO:0007669"/>
    <property type="project" value="TreeGrafter"/>
</dbReference>
<dbReference type="GO" id="GO:0008097">
    <property type="term" value="F:5S rRNA binding"/>
    <property type="evidence" value="ECO:0007669"/>
    <property type="project" value="InterPro"/>
</dbReference>
<dbReference type="GO" id="GO:0003735">
    <property type="term" value="F:structural constituent of ribosome"/>
    <property type="evidence" value="ECO:0007669"/>
    <property type="project" value="InterPro"/>
</dbReference>
<dbReference type="GO" id="GO:0006412">
    <property type="term" value="P:translation"/>
    <property type="evidence" value="ECO:0007669"/>
    <property type="project" value="UniProtKB-UniRule"/>
</dbReference>
<dbReference type="CDD" id="cd00495">
    <property type="entry name" value="Ribosomal_L25_TL5_CTC"/>
    <property type="match status" value="1"/>
</dbReference>
<dbReference type="Gene3D" id="2.170.120.20">
    <property type="entry name" value="Ribosomal protein L25, beta domain"/>
    <property type="match status" value="1"/>
</dbReference>
<dbReference type="Gene3D" id="2.40.240.10">
    <property type="entry name" value="Ribosomal Protein L25, Chain P"/>
    <property type="match status" value="1"/>
</dbReference>
<dbReference type="HAMAP" id="MF_01334">
    <property type="entry name" value="Ribosomal_bL25_CTC"/>
    <property type="match status" value="1"/>
</dbReference>
<dbReference type="InterPro" id="IPR020056">
    <property type="entry name" value="Rbsml_bL25/Gln-tRNA_synth_N"/>
</dbReference>
<dbReference type="InterPro" id="IPR011035">
    <property type="entry name" value="Ribosomal_bL25/Gln-tRNA_synth"/>
</dbReference>
<dbReference type="InterPro" id="IPR020057">
    <property type="entry name" value="Ribosomal_bL25_b-dom"/>
</dbReference>
<dbReference type="InterPro" id="IPR037121">
    <property type="entry name" value="Ribosomal_bL25_C"/>
</dbReference>
<dbReference type="InterPro" id="IPR001021">
    <property type="entry name" value="Ribosomal_bL25_long"/>
</dbReference>
<dbReference type="InterPro" id="IPR029751">
    <property type="entry name" value="Ribosomal_L25_dom"/>
</dbReference>
<dbReference type="InterPro" id="IPR020930">
    <property type="entry name" value="Ribosomal_uL5_bac-type"/>
</dbReference>
<dbReference type="NCBIfam" id="TIGR00731">
    <property type="entry name" value="bL25_bact_ctc"/>
    <property type="match status" value="1"/>
</dbReference>
<dbReference type="PANTHER" id="PTHR33284">
    <property type="entry name" value="RIBOSOMAL PROTEIN L25/GLN-TRNA SYNTHETASE, ANTI-CODON-BINDING DOMAIN-CONTAINING PROTEIN"/>
    <property type="match status" value="1"/>
</dbReference>
<dbReference type="PANTHER" id="PTHR33284:SF1">
    <property type="entry name" value="RIBOSOMAL PROTEIN L25_GLN-TRNA SYNTHETASE, ANTI-CODON-BINDING DOMAIN-CONTAINING PROTEIN"/>
    <property type="match status" value="1"/>
</dbReference>
<dbReference type="Pfam" id="PF01386">
    <property type="entry name" value="Ribosomal_L25p"/>
    <property type="match status" value="1"/>
</dbReference>
<dbReference type="Pfam" id="PF14693">
    <property type="entry name" value="Ribosomal_TL5_C"/>
    <property type="match status" value="1"/>
</dbReference>
<dbReference type="SUPFAM" id="SSF50715">
    <property type="entry name" value="Ribosomal protein L25-like"/>
    <property type="match status" value="1"/>
</dbReference>
<sequence length="205" mass="21816">MNAVLQLEARTRETGSRASRRLRQAGFVPGIIYGPGVEPLAISVPTIQLERLVDRHGRGHLINAHVEGEANPRQVVIKQLQRDVLTAQVTHVDFLQVDIHRTITLTVPIAVVGEEQAKRRGLIVTHELAEVEIKCRPTEIPEAITLDISGVTEPGPVTVASLAAPPGVEVLEDPDTVVLSCTLGFGGVEEAEAEAEAGSSTGPAA</sequence>
<proteinExistence type="inferred from homology"/>
<accession>Q67M29</accession>
<feature type="chain" id="PRO_0000181604" description="Large ribosomal subunit protein bL25A">
    <location>
        <begin position="1"/>
        <end position="205"/>
    </location>
</feature>
<gene>
    <name evidence="1" type="primary">rplY1</name>
    <name evidence="1" type="synonym">ctc1</name>
    <name type="ordered locus">STH2281</name>
</gene>
<name>RL251_SYMTH</name>
<organism>
    <name type="scientific">Symbiobacterium thermophilum (strain DSM 24528 / JCM 14929 / IAM 14863 / T)</name>
    <dbReference type="NCBI Taxonomy" id="292459"/>
    <lineage>
        <taxon>Bacteria</taxon>
        <taxon>Bacillati</taxon>
        <taxon>Bacillota</taxon>
        <taxon>Clostridia</taxon>
        <taxon>Eubacteriales</taxon>
        <taxon>Symbiobacteriaceae</taxon>
        <taxon>Symbiobacterium</taxon>
    </lineage>
</organism>
<evidence type="ECO:0000255" key="1">
    <source>
        <dbReference type="HAMAP-Rule" id="MF_01334"/>
    </source>
</evidence>
<evidence type="ECO:0000305" key="2"/>
<protein>
    <recommendedName>
        <fullName evidence="1">Large ribosomal subunit protein bL25A</fullName>
    </recommendedName>
    <alternativeName>
        <fullName evidence="2">50S ribosomal protein L25 1</fullName>
    </alternativeName>
    <alternativeName>
        <fullName evidence="1">General stress protein CTC 1</fullName>
    </alternativeName>
</protein>
<reference key="1">
    <citation type="journal article" date="2004" name="Nucleic Acids Res.">
        <title>Genome sequence of Symbiobacterium thermophilum, an uncultivable bacterium that depends on microbial commensalism.</title>
        <authorList>
            <person name="Ueda K."/>
            <person name="Yamashita A."/>
            <person name="Ishikawa J."/>
            <person name="Shimada M."/>
            <person name="Watsuji T."/>
            <person name="Morimura K."/>
            <person name="Ikeda H."/>
            <person name="Hattori M."/>
            <person name="Beppu T."/>
        </authorList>
    </citation>
    <scope>NUCLEOTIDE SEQUENCE [LARGE SCALE GENOMIC DNA]</scope>
    <source>
        <strain>DSM 24528 / JCM 14929 / IAM 14863 / T</strain>
    </source>
</reference>
<comment type="function">
    <text evidence="1">This is one of the proteins that binds to the 5S RNA in the ribosome where it forms part of the central protuberance.</text>
</comment>
<comment type="subunit">
    <text evidence="1">Part of the 50S ribosomal subunit; part of the 5S rRNA/L5/L18/L25 subcomplex. Contacts the 5S rRNA. Binds to the 5S rRNA independently of L5 and L18.</text>
</comment>
<comment type="similarity">
    <text evidence="1">Belongs to the bacterial ribosomal protein bL25 family. CTC subfamily.</text>
</comment>
<keyword id="KW-1185">Reference proteome</keyword>
<keyword id="KW-0687">Ribonucleoprotein</keyword>
<keyword id="KW-0689">Ribosomal protein</keyword>
<keyword id="KW-0694">RNA-binding</keyword>
<keyword id="KW-0699">rRNA-binding</keyword>